<reference key="1">
    <citation type="journal article" date="2000" name="J. Virol.">
        <title>The genome of fowlpox virus.</title>
        <authorList>
            <person name="Afonso C.L."/>
            <person name="Tulman E.R."/>
            <person name="Lu Z."/>
            <person name="Zsak L."/>
            <person name="Kutish G.F."/>
            <person name="Rock D.L."/>
        </authorList>
    </citation>
    <scope>NUCLEOTIDE SEQUENCE [LARGE SCALE GENOMIC DNA]</scope>
</reference>
<name>V232_FOWPN</name>
<organism>
    <name type="scientific">Fowlpox virus (strain NVSL)</name>
    <name type="common">FPV</name>
    <dbReference type="NCBI Taxonomy" id="928301"/>
    <lineage>
        <taxon>Viruses</taxon>
        <taxon>Varidnaviria</taxon>
        <taxon>Bamfordvirae</taxon>
        <taxon>Nucleocytoviricota</taxon>
        <taxon>Pokkesviricetes</taxon>
        <taxon>Chitovirales</taxon>
        <taxon>Poxviridae</taxon>
        <taxon>Chordopoxvirinae</taxon>
        <taxon>Avipoxvirus</taxon>
        <taxon>Fowlpox virus</taxon>
    </lineage>
</organism>
<gene>
    <name type="ordered locus">FPV232</name>
</gene>
<feature type="chain" id="PRO_0000067123" description="Putative ankyrin repeat protein FPV232">
    <location>
        <begin position="1"/>
        <end position="482"/>
    </location>
</feature>
<feature type="repeat" description="ANK 1">
    <location>
        <begin position="36"/>
        <end position="65"/>
    </location>
</feature>
<feature type="repeat" description="ANK 2">
    <location>
        <begin position="69"/>
        <end position="100"/>
    </location>
</feature>
<feature type="repeat" description="ANK 3">
    <location>
        <begin position="101"/>
        <end position="128"/>
    </location>
</feature>
<feature type="repeat" description="ANK 4">
    <location>
        <begin position="129"/>
        <end position="161"/>
    </location>
</feature>
<feature type="repeat" description="ANK 5">
    <location>
        <begin position="166"/>
        <end position="195"/>
    </location>
</feature>
<feature type="repeat" description="ANK 6">
    <location>
        <begin position="199"/>
        <end position="228"/>
    </location>
</feature>
<feature type="repeat" description="ANK 7">
    <location>
        <begin position="232"/>
        <end position="265"/>
    </location>
</feature>
<feature type="repeat" description="ANK 8">
    <location>
        <begin position="270"/>
        <end position="297"/>
    </location>
</feature>
<feature type="repeat" description="ANK 9">
    <location>
        <begin position="301"/>
        <end position="332"/>
    </location>
</feature>
<organismHost>
    <name type="scientific">Vertebrata</name>
    <dbReference type="NCBI Taxonomy" id="7742"/>
</organismHost>
<sequence length="482" mass="55457">MLKLYISMFLDSTEHILKEINRLQHKEQRTNGISCIPLIPLHQAVEARNLEVVEALLERGHNVNETDHRYLTPLHIICSHPNKIGMKEVIAEKTKRDLSSYEERAISEACYNNDINIFKMLLLNDGNRTIDDVQLCTIDYDDSIDTKIIKLLLAYGADTKIKTEDKLKTALHYASTNKNYKLAEYLLIYGAEVNSPDIGNNSPMHEAVRHRNEDVVKILLQYGSNTDHMNSCGTTPLHISVGRVLNRNNYSILKILLEHGTSVNIQSSILGFTALHLSIHSEDKLNLLLEYGADPNILNFEKETPLSMAVKVTRYDINIYNRLIYNICLRAFKYPFIKTTEGYIKNMTCINGYPKCKSIKDACEYEIKNLESIKLSPRFSMADFLKDDNSLMMDKIINNDLIDYYYSFMDSFPIYGNIVKKSIDTAKDRYLLIQGAIRSMDNITFPSQRVSWYNMPLEIKHDIMYLLDDKSLCNLIVAEYDS</sequence>
<protein>
    <recommendedName>
        <fullName>Putative ankyrin repeat protein FPV232</fullName>
    </recommendedName>
</protein>
<keyword id="KW-0040">ANK repeat</keyword>
<keyword id="KW-1185">Reference proteome</keyword>
<keyword id="KW-0677">Repeat</keyword>
<dbReference type="EMBL" id="AF198100">
    <property type="protein sequence ID" value="AAF44576.1"/>
    <property type="molecule type" value="Genomic_DNA"/>
</dbReference>
<dbReference type="RefSeq" id="NP_039195.1">
    <property type="nucleotide sequence ID" value="NC_002188.1"/>
</dbReference>
<dbReference type="SMR" id="Q9J503"/>
<dbReference type="GeneID" id="1486804"/>
<dbReference type="KEGG" id="vg:1486804"/>
<dbReference type="Proteomes" id="UP000008597">
    <property type="component" value="Segment"/>
</dbReference>
<dbReference type="Gene3D" id="1.25.40.20">
    <property type="entry name" value="Ankyrin repeat-containing domain"/>
    <property type="match status" value="2"/>
</dbReference>
<dbReference type="InterPro" id="IPR002110">
    <property type="entry name" value="Ankyrin_rpt"/>
</dbReference>
<dbReference type="InterPro" id="IPR036770">
    <property type="entry name" value="Ankyrin_rpt-contain_sf"/>
</dbReference>
<dbReference type="InterPro" id="IPR018272">
    <property type="entry name" value="PRANC_domain"/>
</dbReference>
<dbReference type="PANTHER" id="PTHR24118:SF100">
    <property type="entry name" value="FYVE-TYPE DOMAIN-CONTAINING PROTEIN"/>
    <property type="match status" value="1"/>
</dbReference>
<dbReference type="PANTHER" id="PTHR24118">
    <property type="entry name" value="POTE ANKYRIN DOMAIN"/>
    <property type="match status" value="1"/>
</dbReference>
<dbReference type="Pfam" id="PF00023">
    <property type="entry name" value="Ank"/>
    <property type="match status" value="1"/>
</dbReference>
<dbReference type="Pfam" id="PF12796">
    <property type="entry name" value="Ank_2"/>
    <property type="match status" value="3"/>
</dbReference>
<dbReference type="Pfam" id="PF09372">
    <property type="entry name" value="PRANC"/>
    <property type="match status" value="1"/>
</dbReference>
<dbReference type="SMART" id="SM00248">
    <property type="entry name" value="ANK"/>
    <property type="match status" value="7"/>
</dbReference>
<dbReference type="SUPFAM" id="SSF48403">
    <property type="entry name" value="Ankyrin repeat"/>
    <property type="match status" value="1"/>
</dbReference>
<dbReference type="PROSITE" id="PS50297">
    <property type="entry name" value="ANK_REP_REGION"/>
    <property type="match status" value="1"/>
</dbReference>
<dbReference type="PROSITE" id="PS50088">
    <property type="entry name" value="ANK_REPEAT"/>
    <property type="match status" value="4"/>
</dbReference>
<accession>Q9J503</accession>
<proteinExistence type="predicted"/>